<organism>
    <name type="scientific">Helicobacter pylori (strain ATCC 700392 / 26695)</name>
    <name type="common">Campylobacter pylori</name>
    <dbReference type="NCBI Taxonomy" id="85962"/>
    <lineage>
        <taxon>Bacteria</taxon>
        <taxon>Pseudomonadati</taxon>
        <taxon>Campylobacterota</taxon>
        <taxon>Epsilonproteobacteria</taxon>
        <taxon>Campylobacterales</taxon>
        <taxon>Helicobacteraceae</taxon>
        <taxon>Helicobacter</taxon>
    </lineage>
</organism>
<proteinExistence type="evidence at protein level"/>
<reference key="1">
    <citation type="journal article" date="1997" name="Nature">
        <title>The complete genome sequence of the gastric pathogen Helicobacter pylori.</title>
        <authorList>
            <person name="Tomb J.-F."/>
            <person name="White O."/>
            <person name="Kerlavage A.R."/>
            <person name="Clayton R.A."/>
            <person name="Sutton G.G."/>
            <person name="Fleischmann R.D."/>
            <person name="Ketchum K.A."/>
            <person name="Klenk H.-P."/>
            <person name="Gill S.R."/>
            <person name="Dougherty B.A."/>
            <person name="Nelson K.E."/>
            <person name="Quackenbush J."/>
            <person name="Zhou L."/>
            <person name="Kirkness E.F."/>
            <person name="Peterson S.N."/>
            <person name="Loftus B.J."/>
            <person name="Richardson D.L."/>
            <person name="Dodson R.J."/>
            <person name="Khalak H.G."/>
            <person name="Glodek A."/>
            <person name="McKenney K."/>
            <person name="FitzGerald L.M."/>
            <person name="Lee N."/>
            <person name="Adams M.D."/>
            <person name="Hickey E.K."/>
            <person name="Berg D.E."/>
            <person name="Gocayne J.D."/>
            <person name="Utterback T.R."/>
            <person name="Peterson J.D."/>
            <person name="Kelley J.M."/>
            <person name="Cotton M.D."/>
            <person name="Weidman J.F."/>
            <person name="Fujii C."/>
            <person name="Bowman C."/>
            <person name="Watthey L."/>
            <person name="Wallin E."/>
            <person name="Hayes W.S."/>
            <person name="Borodovsky M."/>
            <person name="Karp P.D."/>
            <person name="Smith H.O."/>
            <person name="Fraser C.M."/>
            <person name="Venter J.C."/>
        </authorList>
    </citation>
    <scope>NUCLEOTIDE SEQUENCE [LARGE SCALE GENOMIC DNA]</scope>
    <source>
        <strain>ATCC 700392 / 26695</strain>
    </source>
</reference>
<reference key="2">
    <citation type="journal article" date="2006" name="Glycobiology">
        <title>Elucidation of the CMP-pseudaminic acid pathway in Helicobacter pylori: synthesis from UDP-N-acetylglucosamine by a single enzymatic reaction.</title>
        <authorList>
            <person name="Schoenhofen I.C."/>
            <person name="McNally D.J."/>
            <person name="Brisson J.R."/>
            <person name="Logan S.M."/>
        </authorList>
    </citation>
    <scope>PATHWAY</scope>
    <source>
        <strain>ATCC 700392 / 26695</strain>
    </source>
</reference>
<reference key="3">
    <citation type="journal article" date="2006" name="J. Biol. Chem.">
        <title>Functional characterization of dehydratase/aminotransferase pairs from Helicobacter and Campylobacter: enzymes distinguishing the pseudaminic acid and bacillosamine biosynthetic pathways.</title>
        <authorList>
            <person name="Schoenhofen I.C."/>
            <person name="McNally D.J."/>
            <person name="Vinogradov E."/>
            <person name="Whitfield D."/>
            <person name="Young N.M."/>
            <person name="Dick S."/>
            <person name="Wakarchuk W.W."/>
            <person name="Brisson J.R."/>
            <person name="Logan S.M."/>
        </authorList>
    </citation>
    <scope>FUNCTION</scope>
    <scope>CATALYTIC ACTIVITY</scope>
    <source>
        <strain>ATCC 700392 / 26695</strain>
    </source>
</reference>
<reference key="4">
    <citation type="journal article" date="2006" name="J. Biol. Chem.">
        <title>Structural and functional characterization of PseC, an aminotransferase involved in the biosynthesis of pseudaminic acid, an essential flagellar modification in Helicobacter pylori.</title>
        <authorList>
            <person name="Schoenhofen I.C."/>
            <person name="Lunin V.V."/>
            <person name="Julien J.P."/>
            <person name="Li Y."/>
            <person name="Ajamian E."/>
            <person name="Matte A."/>
            <person name="Cygler M."/>
            <person name="Brisson J.R."/>
            <person name="Aubry A."/>
            <person name="Logan S.M."/>
            <person name="Bhatia S."/>
            <person name="Wakarchuk W.W."/>
            <person name="Young N.M."/>
        </authorList>
    </citation>
    <scope>X-RAY CRYSTALLOGRAPHY (1.50 ANGSTROMS) IN COMPLEX WITH PYRIDOXAL PHOSPHATE AND URIDINE-DIPHOSPHATE-N-ACETYLGLUCOSAMINE</scope>
    <scope>FUNCTION</scope>
    <scope>CATALYTIC ACTIVITY</scope>
    <scope>SUBUNIT</scope>
    <scope>BIOPHYSICOCHEMICAL PROPERTIES</scope>
    <scope>PYRIDOXAL PHOSPHATE-BINDING SITE LYS-183</scope>
    <scope>MUTAGENESIS OF HIS-180 AND LYS-183</scope>
    <source>
        <strain>ATCC 700392 / 26695</strain>
    </source>
</reference>
<dbReference type="EC" id="2.6.1.92" evidence="1 2"/>
<dbReference type="EMBL" id="AE000511">
    <property type="protein sequence ID" value="AAD07433.1"/>
    <property type="molecule type" value="Genomic_DNA"/>
</dbReference>
<dbReference type="PIR" id="F64565">
    <property type="entry name" value="F64565"/>
</dbReference>
<dbReference type="RefSeq" id="NP_207164.1">
    <property type="nucleotide sequence ID" value="NC_000915.1"/>
</dbReference>
<dbReference type="RefSeq" id="WP_000657303.1">
    <property type="nucleotide sequence ID" value="NC_018939.1"/>
</dbReference>
<dbReference type="PDB" id="2FN6">
    <property type="method" value="X-ray"/>
    <property type="resolution" value="2.48 A"/>
    <property type="chains" value="A/B=1-375"/>
</dbReference>
<dbReference type="PDB" id="2FNI">
    <property type="method" value="X-ray"/>
    <property type="resolution" value="3.00 A"/>
    <property type="chains" value="A/B=1-375"/>
</dbReference>
<dbReference type="PDB" id="2FNU">
    <property type="method" value="X-ray"/>
    <property type="resolution" value="1.50 A"/>
    <property type="chains" value="A/B=1-375"/>
</dbReference>
<dbReference type="PDBsum" id="2FN6"/>
<dbReference type="PDBsum" id="2FNI"/>
<dbReference type="PDBsum" id="2FNU"/>
<dbReference type="SMR" id="O25130"/>
<dbReference type="FunCoup" id="O25130">
    <property type="interactions" value="368"/>
</dbReference>
<dbReference type="STRING" id="85962.HP_0366"/>
<dbReference type="PaxDb" id="85962-C694_01855"/>
<dbReference type="EnsemblBacteria" id="AAD07433">
    <property type="protein sequence ID" value="AAD07433"/>
    <property type="gene ID" value="HP_0366"/>
</dbReference>
<dbReference type="KEGG" id="heo:C694_01855"/>
<dbReference type="KEGG" id="hpy:HP_0366"/>
<dbReference type="PATRIC" id="fig|85962.47.peg.388"/>
<dbReference type="eggNOG" id="COG0399">
    <property type="taxonomic scope" value="Bacteria"/>
</dbReference>
<dbReference type="InParanoid" id="O25130"/>
<dbReference type="OrthoDB" id="5342089at2"/>
<dbReference type="PhylomeDB" id="O25130"/>
<dbReference type="BioCyc" id="MetaCyc:HP0366-MONOMER"/>
<dbReference type="BRENDA" id="2.6.1.92">
    <property type="organism ID" value="2604"/>
</dbReference>
<dbReference type="EvolutionaryTrace" id="O25130"/>
<dbReference type="Proteomes" id="UP000000429">
    <property type="component" value="Chromosome"/>
</dbReference>
<dbReference type="GO" id="GO:0030170">
    <property type="term" value="F:pyridoxal phosphate binding"/>
    <property type="evidence" value="ECO:0000318"/>
    <property type="project" value="GO_Central"/>
</dbReference>
<dbReference type="GO" id="GO:0008483">
    <property type="term" value="F:transaminase activity"/>
    <property type="evidence" value="ECO:0000318"/>
    <property type="project" value="GO_Central"/>
</dbReference>
<dbReference type="GO" id="GO:0000271">
    <property type="term" value="P:polysaccharide biosynthetic process"/>
    <property type="evidence" value="ECO:0000318"/>
    <property type="project" value="GO_Central"/>
</dbReference>
<dbReference type="CDD" id="cd00616">
    <property type="entry name" value="AHBA_syn"/>
    <property type="match status" value="1"/>
</dbReference>
<dbReference type="FunFam" id="3.40.640.10:FF:000259">
    <property type="entry name" value="UDP-4-amino-4,6-dideoxy-N-acetyl-beta-L-altrosamine transaminase"/>
    <property type="match status" value="1"/>
</dbReference>
<dbReference type="FunFam" id="3.90.1150.10:FF:000267">
    <property type="entry name" value="UDP-4-amino-4,6-dideoxy-N-acetyl-beta-L-altrosamine transaminase"/>
    <property type="match status" value="1"/>
</dbReference>
<dbReference type="Gene3D" id="3.90.1150.10">
    <property type="entry name" value="Aspartate Aminotransferase, domain 1"/>
    <property type="match status" value="1"/>
</dbReference>
<dbReference type="Gene3D" id="3.40.640.10">
    <property type="entry name" value="Type I PLP-dependent aspartate aminotransferase-like (Major domain)"/>
    <property type="match status" value="1"/>
</dbReference>
<dbReference type="InterPro" id="IPR000653">
    <property type="entry name" value="DegT/StrS_aminotransferase"/>
</dbReference>
<dbReference type="InterPro" id="IPR020026">
    <property type="entry name" value="PseC"/>
</dbReference>
<dbReference type="InterPro" id="IPR015424">
    <property type="entry name" value="PyrdxlP-dep_Trfase"/>
</dbReference>
<dbReference type="InterPro" id="IPR015421">
    <property type="entry name" value="PyrdxlP-dep_Trfase_major"/>
</dbReference>
<dbReference type="InterPro" id="IPR015422">
    <property type="entry name" value="PyrdxlP-dep_Trfase_small"/>
</dbReference>
<dbReference type="NCBIfam" id="TIGR03588">
    <property type="entry name" value="PseC"/>
    <property type="match status" value="1"/>
</dbReference>
<dbReference type="PANTHER" id="PTHR30244:SF34">
    <property type="entry name" value="DTDP-4-AMINO-4,6-DIDEOXYGALACTOSE TRANSAMINASE"/>
    <property type="match status" value="1"/>
</dbReference>
<dbReference type="PANTHER" id="PTHR30244">
    <property type="entry name" value="TRANSAMINASE"/>
    <property type="match status" value="1"/>
</dbReference>
<dbReference type="Pfam" id="PF01041">
    <property type="entry name" value="DegT_DnrJ_EryC1"/>
    <property type="match status" value="1"/>
</dbReference>
<dbReference type="PIRSF" id="PIRSF000390">
    <property type="entry name" value="PLP_StrS"/>
    <property type="match status" value="1"/>
</dbReference>
<dbReference type="SUPFAM" id="SSF53383">
    <property type="entry name" value="PLP-dependent transferases"/>
    <property type="match status" value="1"/>
</dbReference>
<evidence type="ECO:0000269" key="1">
    <source>
    </source>
</evidence>
<evidence type="ECO:0000269" key="2">
    <source>
    </source>
</evidence>
<evidence type="ECO:0000305" key="3"/>
<evidence type="ECO:0007829" key="4">
    <source>
        <dbReference type="PDB" id="2FNU"/>
    </source>
</evidence>
<sequence>MKEFAYSEPCLDKEDKKAVLEVLNSKQLTQGKRSLLFEEALCEFLGVKHALVFNSATSALLTLYRNFSEFSADRNEIITTPISFVATANMLLESGYTPVFAGIKNDGNIDELALEKLINERTKAIVSVDYAGKSVEVESVQKLCKKHSLSFLSDSSHALGSEYQNKKVGGFALASVFSFHAIKPITTAEGGAVVTNDSELHEKMKLFRSHGMLKKDFFEGEVKSIGHNFRLNEIQSALGLSQLKKAPFLMQKREEAALTYDRIFKDNPYFTPLHPLLKDKSSNHLYPILMHQKFFTCKKLILESLHKRGILAQVHYKPIYQYQLYQQLFNTAPLKSAEDFYHAEISLPCHANLNLESVQNIAHSVLKTFESFKIE</sequence>
<feature type="chain" id="PRO_0000418957" description="UDP-4-amino-4,6-dideoxy-N-acetyl-beta-L-altrosamine transaminase">
    <location>
        <begin position="1"/>
        <end position="375"/>
    </location>
</feature>
<feature type="binding site">
    <location>
        <position position="6"/>
    </location>
    <ligand>
        <name>substrate</name>
    </ligand>
</feature>
<feature type="binding site">
    <location>
        <begin position="26"/>
        <end position="29"/>
    </location>
    <ligand>
        <name>substrate</name>
    </ligand>
</feature>
<feature type="binding site">
    <location>
        <position position="56"/>
    </location>
    <ligand>
        <name>substrate</name>
    </ligand>
</feature>
<feature type="binding site">
    <location>
        <position position="178"/>
    </location>
    <ligand>
        <name>substrate</name>
    </ligand>
</feature>
<feature type="binding site">
    <location>
        <position position="228"/>
    </location>
    <ligand>
        <name>substrate</name>
    </ligand>
</feature>
<feature type="binding site">
    <location>
        <begin position="313"/>
        <end position="316"/>
    </location>
    <ligand>
        <name>substrate</name>
    </ligand>
</feature>
<feature type="modified residue" description="N6-(pyridoxal phosphate)lysine">
    <location>
        <position position="183"/>
    </location>
</feature>
<feature type="mutagenesis site" description="Impaired catalytic activity." evidence="2">
    <original>H</original>
    <variation>N</variation>
    <location>
        <position position="180"/>
    </location>
</feature>
<feature type="mutagenesis site" description="Strongly impaired catalytic activity." evidence="2">
    <original>K</original>
    <variation>R</variation>
    <location>
        <position position="183"/>
    </location>
</feature>
<feature type="strand" evidence="4">
    <location>
        <begin position="4"/>
        <end position="6"/>
    </location>
</feature>
<feature type="helix" evidence="4">
    <location>
        <begin position="13"/>
        <end position="23"/>
    </location>
</feature>
<feature type="strand" evidence="4">
    <location>
        <begin position="29"/>
        <end position="31"/>
    </location>
</feature>
<feature type="helix" evidence="4">
    <location>
        <begin position="32"/>
        <end position="45"/>
    </location>
</feature>
<feature type="strand" evidence="4">
    <location>
        <begin position="48"/>
        <end position="54"/>
    </location>
</feature>
<feature type="helix" evidence="4">
    <location>
        <begin position="56"/>
        <end position="66"/>
    </location>
</feature>
<feature type="strand" evidence="4">
    <location>
        <begin position="76"/>
        <end position="79"/>
    </location>
</feature>
<feature type="strand" evidence="4">
    <location>
        <begin position="81"/>
        <end position="83"/>
    </location>
</feature>
<feature type="helix" evidence="4">
    <location>
        <begin position="86"/>
        <end position="93"/>
    </location>
</feature>
<feature type="strand" evidence="4">
    <location>
        <begin position="97"/>
        <end position="100"/>
    </location>
</feature>
<feature type="strand" evidence="4">
    <location>
        <begin position="107"/>
        <end position="109"/>
    </location>
</feature>
<feature type="helix" evidence="4">
    <location>
        <begin position="111"/>
        <end position="113"/>
    </location>
</feature>
<feature type="helix" evidence="4">
    <location>
        <begin position="115"/>
        <end position="117"/>
    </location>
</feature>
<feature type="strand" evidence="4">
    <location>
        <begin position="122"/>
        <end position="128"/>
    </location>
</feature>
<feature type="helix" evidence="4">
    <location>
        <begin position="130"/>
        <end position="132"/>
    </location>
</feature>
<feature type="helix" evidence="4">
    <location>
        <begin position="137"/>
        <end position="147"/>
    </location>
</feature>
<feature type="strand" evidence="4">
    <location>
        <begin position="150"/>
        <end position="154"/>
    </location>
</feature>
<feature type="strand" evidence="4">
    <location>
        <begin position="170"/>
        <end position="178"/>
    </location>
</feature>
<feature type="strand" evidence="4">
    <location>
        <begin position="183"/>
        <end position="185"/>
    </location>
</feature>
<feature type="strand" evidence="4">
    <location>
        <begin position="191"/>
        <end position="196"/>
    </location>
</feature>
<feature type="helix" evidence="4">
    <location>
        <begin position="198"/>
        <end position="207"/>
    </location>
</feature>
<feature type="strand" evidence="4">
    <location>
        <begin position="212"/>
        <end position="218"/>
    </location>
</feature>
<feature type="strand" evidence="4">
    <location>
        <begin position="220"/>
        <end position="224"/>
    </location>
</feature>
<feature type="helix" evidence="4">
    <location>
        <begin position="233"/>
        <end position="243"/>
    </location>
</feature>
<feature type="helix" evidence="4">
    <location>
        <begin position="246"/>
        <end position="264"/>
    </location>
</feature>
<feature type="strand" evidence="4">
    <location>
        <begin position="268"/>
        <end position="273"/>
    </location>
</feature>
<feature type="helix" evidence="4">
    <location>
        <begin position="274"/>
        <end position="276"/>
    </location>
</feature>
<feature type="strand" evidence="4">
    <location>
        <begin position="286"/>
        <end position="290"/>
    </location>
</feature>
<feature type="helix" evidence="4">
    <location>
        <begin position="292"/>
        <end position="297"/>
    </location>
</feature>
<feature type="helix" evidence="4">
    <location>
        <begin position="298"/>
        <end position="307"/>
    </location>
</feature>
<feature type="helix" evidence="4">
    <location>
        <begin position="319"/>
        <end position="321"/>
    </location>
</feature>
<feature type="helix" evidence="4">
    <location>
        <begin position="323"/>
        <end position="329"/>
    </location>
</feature>
<feature type="helix" evidence="4">
    <location>
        <begin position="335"/>
        <end position="343"/>
    </location>
</feature>
<feature type="strand" evidence="4">
    <location>
        <begin position="344"/>
        <end position="347"/>
    </location>
</feature>
<feature type="helix" evidence="4">
    <location>
        <begin position="355"/>
        <end position="372"/>
    </location>
</feature>
<accession>O25130</accession>
<keyword id="KW-0002">3D-structure</keyword>
<keyword id="KW-0032">Aminotransferase</keyword>
<keyword id="KW-0663">Pyridoxal phosphate</keyword>
<keyword id="KW-1185">Reference proteome</keyword>
<keyword id="KW-0808">Transferase</keyword>
<name>PSEC_HELPY</name>
<comment type="function">
    <text evidence="1 2">Catalyzes the second step in the biosynthesis of pseudaminic acid, a sialic-acid-like sugar that is used to modify flagellin. Uses UDP-2-acetamido-2,6-dideoxy-beta-L-arabino-4-hexulose as substrate producing UDP-4-amino-4,6-dideoxy-beta-L-AltNAc.</text>
</comment>
<comment type="catalytic activity">
    <reaction evidence="1 2">
        <text>UDP-4-amino-4,6-dideoxy-N-acetyl-beta-L-altrosamine + 2-oxoglutarate = UDP-2-acetamido-2,6-dideoxy-beta-L-arabino-hex-4-ulose + L-glutamate</text>
        <dbReference type="Rhea" id="RHEA:31767"/>
        <dbReference type="ChEBI" id="CHEBI:16810"/>
        <dbReference type="ChEBI" id="CHEBI:29985"/>
        <dbReference type="ChEBI" id="CHEBI:60101"/>
        <dbReference type="ChEBI" id="CHEBI:63389"/>
        <dbReference type="EC" id="2.6.1.92"/>
    </reaction>
</comment>
<comment type="biophysicochemical properties">
    <kinetics>
        <KM evidence="2">0.2 mM for UDP-2-acetamido-2,6-dideoxy-beta-L-arabino-4-hexulose</KM>
        <text>kcat is 43 min(-1) with (2E,6E)-farnesyl UDP-2-acetamido-2,6-dideoxy-beta-L-arabino-4-hexulose as substrate.</text>
    </kinetics>
</comment>
<comment type="similarity">
    <text evidence="3">Belongs to the DegT/DnrJ/EryC1 family.</text>
</comment>
<protein>
    <recommendedName>
        <fullName>UDP-4-amino-4,6-dideoxy-N-acetyl-beta-L-altrosamine transaminase</fullName>
        <ecNumber evidence="1 2">2.6.1.92</ecNumber>
    </recommendedName>
    <alternativeName>
        <fullName>Pseudaminic acid biosynthesis protein C</fullName>
    </alternativeName>
</protein>
<gene>
    <name type="primary">pseC</name>
    <name type="ordered locus">HP_0366</name>
</gene>